<name>UGX2_YEAST</name>
<dbReference type="EMBL" id="X82846">
    <property type="protein sequence ID" value="CAA58048.1"/>
    <property type="molecule type" value="Genomic_DNA"/>
</dbReference>
<dbReference type="EMBL" id="Z67750">
    <property type="protein sequence ID" value="CAA91577.1"/>
    <property type="molecule type" value="Genomic_DNA"/>
</dbReference>
<dbReference type="EMBL" id="Z74217">
    <property type="protein sequence ID" value="CAA98743.1"/>
    <property type="molecule type" value="Genomic_DNA"/>
</dbReference>
<dbReference type="EMBL" id="AY557651">
    <property type="protein sequence ID" value="AAS55977.1"/>
    <property type="molecule type" value="Genomic_DNA"/>
</dbReference>
<dbReference type="EMBL" id="X68020">
    <property type="status" value="NOT_ANNOTATED_CDS"/>
    <property type="molecule type" value="Genomic_DNA"/>
</dbReference>
<dbReference type="EMBL" id="BK006938">
    <property type="protein sequence ID" value="DAA11692.1"/>
    <property type="molecule type" value="Genomic_DNA"/>
</dbReference>
<dbReference type="PIR" id="S55468">
    <property type="entry name" value="S55468"/>
</dbReference>
<dbReference type="RefSeq" id="NP_010112.1">
    <property type="nucleotide sequence ID" value="NM_001180229.1"/>
</dbReference>
<dbReference type="BioGRID" id="31896">
    <property type="interactions" value="35"/>
</dbReference>
<dbReference type="FunCoup" id="P32772">
    <property type="interactions" value="44"/>
</dbReference>
<dbReference type="IntAct" id="P32772">
    <property type="interactions" value="1"/>
</dbReference>
<dbReference type="STRING" id="4932.YDL169C"/>
<dbReference type="iPTMnet" id="P32772"/>
<dbReference type="PaxDb" id="4932-YDL169C"/>
<dbReference type="PeptideAtlas" id="P32772"/>
<dbReference type="EnsemblFungi" id="YDL169C_mRNA">
    <property type="protein sequence ID" value="YDL169C"/>
    <property type="gene ID" value="YDL169C"/>
</dbReference>
<dbReference type="GeneID" id="851385"/>
<dbReference type="KEGG" id="sce:YDL169C"/>
<dbReference type="AGR" id="SGD:S000002328"/>
<dbReference type="SGD" id="S000002328">
    <property type="gene designation" value="UGX2"/>
</dbReference>
<dbReference type="VEuPathDB" id="FungiDB:YDL169C"/>
<dbReference type="eggNOG" id="ENOG502S4UZ">
    <property type="taxonomic scope" value="Eukaryota"/>
</dbReference>
<dbReference type="HOGENOM" id="CLU_126659_0_0_1"/>
<dbReference type="InParanoid" id="P32772"/>
<dbReference type="OMA" id="QYQQMCK"/>
<dbReference type="OrthoDB" id="4063176at2759"/>
<dbReference type="BioCyc" id="YEAST:G3O-29560-MONOMER"/>
<dbReference type="BioGRID-ORCS" id="851385">
    <property type="hits" value="0 hits in 10 CRISPR screens"/>
</dbReference>
<dbReference type="ChiTaRS" id="UGX2">
    <property type="organism name" value="yeast"/>
</dbReference>
<dbReference type="PRO" id="PR:P32772"/>
<dbReference type="Proteomes" id="UP000002311">
    <property type="component" value="Chromosome IV"/>
</dbReference>
<dbReference type="RNAct" id="P32772">
    <property type="molecule type" value="protein"/>
</dbReference>
<organism>
    <name type="scientific">Saccharomyces cerevisiae (strain ATCC 204508 / S288c)</name>
    <name type="common">Baker's yeast</name>
    <dbReference type="NCBI Taxonomy" id="559292"/>
    <lineage>
        <taxon>Eukaryota</taxon>
        <taxon>Fungi</taxon>
        <taxon>Dikarya</taxon>
        <taxon>Ascomycota</taxon>
        <taxon>Saccharomycotina</taxon>
        <taxon>Saccharomycetes</taxon>
        <taxon>Saccharomycetales</taxon>
        <taxon>Saccharomycetaceae</taxon>
        <taxon>Saccharomyces</taxon>
    </lineage>
</organism>
<proteinExistence type="evidence at protein level"/>
<gene>
    <name type="primary">UGX2</name>
    <name type="ordered locus">YDL169C</name>
</gene>
<accession>P32772</accession>
<accession>D6VRI2</accession>
<reference key="1">
    <citation type="submission" date="1994-11" db="EMBL/GenBank/DDBJ databases">
        <authorList>
            <person name="Lindner Z."/>
        </authorList>
    </citation>
    <scope>NUCLEOTIDE SEQUENCE [GENOMIC DNA]</scope>
    <source>
        <strain>ATCC 38626 / AH22 / NRRL Y-12843</strain>
    </source>
</reference>
<reference key="2">
    <citation type="journal article" date="1997" name="Nature">
        <title>The nucleotide sequence of Saccharomyces cerevisiae chromosome IV.</title>
        <authorList>
            <person name="Jacq C."/>
            <person name="Alt-Moerbe J."/>
            <person name="Andre B."/>
            <person name="Arnold W."/>
            <person name="Bahr A."/>
            <person name="Ballesta J.P.G."/>
            <person name="Bargues M."/>
            <person name="Baron L."/>
            <person name="Becker A."/>
            <person name="Biteau N."/>
            <person name="Bloecker H."/>
            <person name="Blugeon C."/>
            <person name="Boskovic J."/>
            <person name="Brandt P."/>
            <person name="Brueckner M."/>
            <person name="Buitrago M.J."/>
            <person name="Coster F."/>
            <person name="Delaveau T."/>
            <person name="del Rey F."/>
            <person name="Dujon B."/>
            <person name="Eide L.G."/>
            <person name="Garcia-Cantalejo J.M."/>
            <person name="Goffeau A."/>
            <person name="Gomez-Peris A."/>
            <person name="Granotier C."/>
            <person name="Hanemann V."/>
            <person name="Hankeln T."/>
            <person name="Hoheisel J.D."/>
            <person name="Jaeger W."/>
            <person name="Jimenez A."/>
            <person name="Jonniaux J.-L."/>
            <person name="Kraemer C."/>
            <person name="Kuester H."/>
            <person name="Laamanen P."/>
            <person name="Legros Y."/>
            <person name="Louis E.J."/>
            <person name="Moeller-Rieker S."/>
            <person name="Monnet A."/>
            <person name="Moro M."/>
            <person name="Mueller-Auer S."/>
            <person name="Nussbaumer B."/>
            <person name="Paricio N."/>
            <person name="Paulin L."/>
            <person name="Perea J."/>
            <person name="Perez-Alonso M."/>
            <person name="Perez-Ortin J.E."/>
            <person name="Pohl T.M."/>
            <person name="Prydz H."/>
            <person name="Purnelle B."/>
            <person name="Rasmussen S.W."/>
            <person name="Remacha M.A."/>
            <person name="Revuelta J.L."/>
            <person name="Rieger M."/>
            <person name="Salom D."/>
            <person name="Saluz H.P."/>
            <person name="Saiz J.E."/>
            <person name="Saren A.-M."/>
            <person name="Schaefer M."/>
            <person name="Scharfe M."/>
            <person name="Schmidt E.R."/>
            <person name="Schneider C."/>
            <person name="Scholler P."/>
            <person name="Schwarz S."/>
            <person name="Soler-Mira A."/>
            <person name="Urrestarazu L.A."/>
            <person name="Verhasselt P."/>
            <person name="Vissers S."/>
            <person name="Voet M."/>
            <person name="Volckaert G."/>
            <person name="Wagner G."/>
            <person name="Wambutt R."/>
            <person name="Wedler E."/>
            <person name="Wedler H."/>
            <person name="Woelfl S."/>
            <person name="Harris D.E."/>
            <person name="Bowman S."/>
            <person name="Brown D."/>
            <person name="Churcher C.M."/>
            <person name="Connor R."/>
            <person name="Dedman K."/>
            <person name="Gentles S."/>
            <person name="Hamlin N."/>
            <person name="Hunt S."/>
            <person name="Jones L."/>
            <person name="McDonald S."/>
            <person name="Murphy L.D."/>
            <person name="Niblett D."/>
            <person name="Odell C."/>
            <person name="Oliver K."/>
            <person name="Rajandream M.A."/>
            <person name="Richards C."/>
            <person name="Shore L."/>
            <person name="Walsh S.V."/>
            <person name="Barrell B.G."/>
            <person name="Dietrich F.S."/>
            <person name="Mulligan J.T."/>
            <person name="Allen E."/>
            <person name="Araujo R."/>
            <person name="Aviles E."/>
            <person name="Berno A."/>
            <person name="Carpenter J."/>
            <person name="Chen E."/>
            <person name="Cherry J.M."/>
            <person name="Chung E."/>
            <person name="Duncan M."/>
            <person name="Hunicke-Smith S."/>
            <person name="Hyman R.W."/>
            <person name="Komp C."/>
            <person name="Lashkari D."/>
            <person name="Lew H."/>
            <person name="Lin D."/>
            <person name="Mosedale D."/>
            <person name="Nakahara K."/>
            <person name="Namath A."/>
            <person name="Oefner P."/>
            <person name="Oh C."/>
            <person name="Petel F.X."/>
            <person name="Roberts D."/>
            <person name="Schramm S."/>
            <person name="Schroeder M."/>
            <person name="Shogren T."/>
            <person name="Shroff N."/>
            <person name="Winant A."/>
            <person name="Yelton M.A."/>
            <person name="Botstein D."/>
            <person name="Davis R.W."/>
            <person name="Johnston M."/>
            <person name="Andrews S."/>
            <person name="Brinkman R."/>
            <person name="Cooper J."/>
            <person name="Ding H."/>
            <person name="Du Z."/>
            <person name="Favello A."/>
            <person name="Fulton L."/>
            <person name="Gattung S."/>
            <person name="Greco T."/>
            <person name="Hallsworth K."/>
            <person name="Hawkins J."/>
            <person name="Hillier L.W."/>
            <person name="Jier M."/>
            <person name="Johnson D."/>
            <person name="Johnston L."/>
            <person name="Kirsten J."/>
            <person name="Kucaba T."/>
            <person name="Langston Y."/>
            <person name="Latreille P."/>
            <person name="Le T."/>
            <person name="Mardis E."/>
            <person name="Menezes S."/>
            <person name="Miller N."/>
            <person name="Nhan M."/>
            <person name="Pauley A."/>
            <person name="Peluso D."/>
            <person name="Rifkin L."/>
            <person name="Riles L."/>
            <person name="Taich A."/>
            <person name="Trevaskis E."/>
            <person name="Vignati D."/>
            <person name="Wilcox L."/>
            <person name="Wohldman P."/>
            <person name="Vaudin M."/>
            <person name="Wilson R."/>
            <person name="Waterston R."/>
            <person name="Albermann K."/>
            <person name="Hani J."/>
            <person name="Heumann K."/>
            <person name="Kleine K."/>
            <person name="Mewes H.-W."/>
            <person name="Zollner A."/>
            <person name="Zaccaria P."/>
        </authorList>
    </citation>
    <scope>NUCLEOTIDE SEQUENCE [LARGE SCALE GENOMIC DNA]</scope>
    <source>
        <strain>ATCC 204508 / S288c</strain>
    </source>
</reference>
<reference key="3">
    <citation type="journal article" date="2014" name="G3 (Bethesda)">
        <title>The reference genome sequence of Saccharomyces cerevisiae: Then and now.</title>
        <authorList>
            <person name="Engel S.R."/>
            <person name="Dietrich F.S."/>
            <person name="Fisk D.G."/>
            <person name="Binkley G."/>
            <person name="Balakrishnan R."/>
            <person name="Costanzo M.C."/>
            <person name="Dwight S.S."/>
            <person name="Hitz B.C."/>
            <person name="Karra K."/>
            <person name="Nash R.S."/>
            <person name="Weng S."/>
            <person name="Wong E.D."/>
            <person name="Lloyd P."/>
            <person name="Skrzypek M.S."/>
            <person name="Miyasato S.R."/>
            <person name="Simison M."/>
            <person name="Cherry J.M."/>
        </authorList>
    </citation>
    <scope>GENOME REANNOTATION</scope>
    <source>
        <strain>ATCC 204508 / S288c</strain>
    </source>
</reference>
<reference key="4">
    <citation type="journal article" date="2007" name="Genome Res.">
        <title>Approaching a complete repository of sequence-verified protein-encoding clones for Saccharomyces cerevisiae.</title>
        <authorList>
            <person name="Hu Y."/>
            <person name="Rolfs A."/>
            <person name="Bhullar B."/>
            <person name="Murthy T.V.S."/>
            <person name="Zhu C."/>
            <person name="Berger M.F."/>
            <person name="Camargo A.A."/>
            <person name="Kelley F."/>
            <person name="McCarron S."/>
            <person name="Jepson D."/>
            <person name="Richardson A."/>
            <person name="Raphael J."/>
            <person name="Moreira D."/>
            <person name="Taycher E."/>
            <person name="Zuo D."/>
            <person name="Mohr S."/>
            <person name="Kane M.F."/>
            <person name="Williamson J."/>
            <person name="Simpson A.J.G."/>
            <person name="Bulyk M.L."/>
            <person name="Harlow E."/>
            <person name="Marsischky G."/>
            <person name="Kolodner R.D."/>
            <person name="LaBaer J."/>
        </authorList>
    </citation>
    <scope>NUCLEOTIDE SEQUENCE [GENOMIC DNA]</scope>
    <source>
        <strain>ATCC 204508 / S288c</strain>
    </source>
</reference>
<reference key="5">
    <citation type="journal article" date="1993" name="Mol. Gen. Genet.">
        <title>Molecular structure and genetic regulation of SFA, a gene responsible for resistance to formaldehyde in Saccharomyces cerevisiae, and characterization of its protein product.</title>
        <authorList>
            <person name="Wehner E.P."/>
            <person name="Rao E."/>
            <person name="Brendel M."/>
        </authorList>
    </citation>
    <scope>NUCLEOTIDE SEQUENCE [GENOMIC DNA] OF 1-104</scope>
    <source>
        <strain>ATCC 38626 / AH22 / NRRL Y-12843</strain>
    </source>
</reference>
<reference key="6">
    <citation type="journal article" date="2004" name="Proc. Natl. Acad. Sci. U.S.A.">
        <title>Global analysis of nutrient control of gene expression in Saccharomyces cerevisiae during growth and starvation.</title>
        <authorList>
            <person name="Wu J."/>
            <person name="Zhang N."/>
            <person name="Hayes A."/>
            <person name="Panoutsopoulou K."/>
            <person name="Oliver S.G."/>
        </authorList>
    </citation>
    <scope>INDUCTION</scope>
</reference>
<reference key="7">
    <citation type="journal article" date="2008" name="Mol. Cell. Proteomics">
        <title>A multidimensional chromatography technology for in-depth phosphoproteome analysis.</title>
        <authorList>
            <person name="Albuquerque C.P."/>
            <person name="Smolka M.B."/>
            <person name="Payne S.H."/>
            <person name="Bafna V."/>
            <person name="Eng J."/>
            <person name="Zhou H."/>
        </authorList>
    </citation>
    <scope>IDENTIFICATION BY MASS SPECTROMETRY [LARGE SCALE ANALYSIS]</scope>
</reference>
<reference key="8">
    <citation type="journal article" date="2009" name="Science">
        <title>Global analysis of Cdk1 substrate phosphorylation sites provides insights into evolution.</title>
        <authorList>
            <person name="Holt L.J."/>
            <person name="Tuch B.B."/>
            <person name="Villen J."/>
            <person name="Johnson A.D."/>
            <person name="Gygi S.P."/>
            <person name="Morgan D.O."/>
        </authorList>
    </citation>
    <scope>IDENTIFICATION BY MASS SPECTROMETRY [LARGE SCALE ANALYSIS]</scope>
</reference>
<keyword id="KW-1185">Reference proteome</keyword>
<evidence type="ECO:0000256" key="1">
    <source>
        <dbReference type="SAM" id="MobiDB-lite"/>
    </source>
</evidence>
<evidence type="ECO:0000269" key="2">
    <source>
    </source>
</evidence>
<protein>
    <recommendedName>
        <fullName>Protein UGX2</fullName>
    </recommendedName>
</protein>
<comment type="induction">
    <text evidence="2">In carbon, ammonium, phosphate and sulfate starvation conditions.</text>
</comment>
<sequence length="223" mass="25732">MEDKEKLIVYSNTSSVFTYSAEIRPNFKISVSQSQGFAWNQDLFATQYQQSYKVVYDAHEDNFDELILKIKGKLKTKSNKRAKMKSKTKLTRTAKQRRESPVCERDESDEDNDSDHYQRIQVLDGHEFPRANRYKSVWAHDVHSNEDSTSDGESNHDIDMIGGTGTSYAGAAIMDRPRRKSERSISFVEDSKTGDYRYQTGQVDVVEVDSDTPENNHLKWLIK</sequence>
<feature type="chain" id="PRO_0000065718" description="Protein UGX2">
    <location>
        <begin position="1"/>
        <end position="223"/>
    </location>
</feature>
<feature type="region of interest" description="Disordered" evidence="1">
    <location>
        <begin position="78"/>
        <end position="117"/>
    </location>
</feature>
<feature type="compositionally biased region" description="Basic residues" evidence="1">
    <location>
        <begin position="78"/>
        <end position="95"/>
    </location>
</feature>
<feature type="compositionally biased region" description="Basic and acidic residues" evidence="1">
    <location>
        <begin position="96"/>
        <end position="105"/>
    </location>
</feature>